<keyword id="KW-1185">Reference proteome</keyword>
<keyword id="KW-0687">Ribonucleoprotein</keyword>
<keyword id="KW-0689">Ribosomal protein</keyword>
<keyword id="KW-0694">RNA-binding</keyword>
<keyword id="KW-0699">rRNA-binding</keyword>
<sequence length="127" mass="13385">MAKPTRKRRVKKNIESGIAHIHATFNNTIVMITDVHGNAIAWSSAGALGFKGSRKSTPFAAQMASEAAAKSAQEHGLKSVEVTVKGPGSGRESAIRALAAAGLEVTAIRDVTPVPHNGARPPKRRRV</sequence>
<dbReference type="EMBL" id="CP000725">
    <property type="protein sequence ID" value="ABV09666.1"/>
    <property type="molecule type" value="Genomic_DNA"/>
</dbReference>
<dbReference type="RefSeq" id="WP_001118385.1">
    <property type="nucleotide sequence ID" value="NC_009785.1"/>
</dbReference>
<dbReference type="SMR" id="A8AZK0"/>
<dbReference type="STRING" id="467705.SGO_1960"/>
<dbReference type="GeneID" id="93964226"/>
<dbReference type="KEGG" id="sgo:SGO_1960"/>
<dbReference type="eggNOG" id="COG0100">
    <property type="taxonomic scope" value="Bacteria"/>
</dbReference>
<dbReference type="HOGENOM" id="CLU_072439_5_0_9"/>
<dbReference type="Proteomes" id="UP000001131">
    <property type="component" value="Chromosome"/>
</dbReference>
<dbReference type="GO" id="GO:1990904">
    <property type="term" value="C:ribonucleoprotein complex"/>
    <property type="evidence" value="ECO:0007669"/>
    <property type="project" value="UniProtKB-KW"/>
</dbReference>
<dbReference type="GO" id="GO:0005840">
    <property type="term" value="C:ribosome"/>
    <property type="evidence" value="ECO:0007669"/>
    <property type="project" value="UniProtKB-KW"/>
</dbReference>
<dbReference type="GO" id="GO:0019843">
    <property type="term" value="F:rRNA binding"/>
    <property type="evidence" value="ECO:0007669"/>
    <property type="project" value="UniProtKB-UniRule"/>
</dbReference>
<dbReference type="GO" id="GO:0003735">
    <property type="term" value="F:structural constituent of ribosome"/>
    <property type="evidence" value="ECO:0007669"/>
    <property type="project" value="InterPro"/>
</dbReference>
<dbReference type="GO" id="GO:0006412">
    <property type="term" value="P:translation"/>
    <property type="evidence" value="ECO:0007669"/>
    <property type="project" value="UniProtKB-UniRule"/>
</dbReference>
<dbReference type="FunFam" id="3.30.420.80:FF:000001">
    <property type="entry name" value="30S ribosomal protein S11"/>
    <property type="match status" value="1"/>
</dbReference>
<dbReference type="Gene3D" id="3.30.420.80">
    <property type="entry name" value="Ribosomal protein S11"/>
    <property type="match status" value="1"/>
</dbReference>
<dbReference type="HAMAP" id="MF_01310">
    <property type="entry name" value="Ribosomal_uS11"/>
    <property type="match status" value="1"/>
</dbReference>
<dbReference type="InterPro" id="IPR001971">
    <property type="entry name" value="Ribosomal_uS11"/>
</dbReference>
<dbReference type="InterPro" id="IPR019981">
    <property type="entry name" value="Ribosomal_uS11_bac-type"/>
</dbReference>
<dbReference type="InterPro" id="IPR018102">
    <property type="entry name" value="Ribosomal_uS11_CS"/>
</dbReference>
<dbReference type="InterPro" id="IPR036967">
    <property type="entry name" value="Ribosomal_uS11_sf"/>
</dbReference>
<dbReference type="NCBIfam" id="NF003698">
    <property type="entry name" value="PRK05309.1"/>
    <property type="match status" value="1"/>
</dbReference>
<dbReference type="NCBIfam" id="TIGR03632">
    <property type="entry name" value="uS11_bact"/>
    <property type="match status" value="1"/>
</dbReference>
<dbReference type="PANTHER" id="PTHR11759">
    <property type="entry name" value="40S RIBOSOMAL PROTEIN S14/30S RIBOSOMAL PROTEIN S11"/>
    <property type="match status" value="1"/>
</dbReference>
<dbReference type="Pfam" id="PF00411">
    <property type="entry name" value="Ribosomal_S11"/>
    <property type="match status" value="1"/>
</dbReference>
<dbReference type="PIRSF" id="PIRSF002131">
    <property type="entry name" value="Ribosomal_S11"/>
    <property type="match status" value="1"/>
</dbReference>
<dbReference type="SUPFAM" id="SSF53137">
    <property type="entry name" value="Translational machinery components"/>
    <property type="match status" value="1"/>
</dbReference>
<dbReference type="PROSITE" id="PS00054">
    <property type="entry name" value="RIBOSOMAL_S11"/>
    <property type="match status" value="1"/>
</dbReference>
<comment type="function">
    <text evidence="1">Located on the platform of the 30S subunit, it bridges several disparate RNA helices of the 16S rRNA. Forms part of the Shine-Dalgarno cleft in the 70S ribosome.</text>
</comment>
<comment type="subunit">
    <text evidence="1">Part of the 30S ribosomal subunit. Interacts with proteins S7 and S18. Binds to IF-3.</text>
</comment>
<comment type="similarity">
    <text evidence="1">Belongs to the universal ribosomal protein uS11 family.</text>
</comment>
<gene>
    <name evidence="1" type="primary">rpsK</name>
    <name type="ordered locus">SGO_1960</name>
</gene>
<evidence type="ECO:0000255" key="1">
    <source>
        <dbReference type="HAMAP-Rule" id="MF_01310"/>
    </source>
</evidence>
<evidence type="ECO:0000305" key="2"/>
<protein>
    <recommendedName>
        <fullName evidence="1">Small ribosomal subunit protein uS11</fullName>
    </recommendedName>
    <alternativeName>
        <fullName evidence="2">30S ribosomal protein S11</fullName>
    </alternativeName>
</protein>
<proteinExistence type="inferred from homology"/>
<accession>A8AZK0</accession>
<name>RS11_STRGC</name>
<reference key="1">
    <citation type="journal article" date="2007" name="J. Bacteriol.">
        <title>Genome-wide transcriptional changes in Streptococcus gordonii in response to competence signaling peptide.</title>
        <authorList>
            <person name="Vickerman M.M."/>
            <person name="Iobst S."/>
            <person name="Jesionowski A.M."/>
            <person name="Gill S.R."/>
        </authorList>
    </citation>
    <scope>NUCLEOTIDE SEQUENCE [LARGE SCALE GENOMIC DNA]</scope>
    <source>
        <strain>Challis / ATCC 35105 / BCRC 15272 / CH1 / DL1 / V288</strain>
    </source>
</reference>
<organism>
    <name type="scientific">Streptococcus gordonii (strain Challis / ATCC 35105 / BCRC 15272 / CH1 / DL1 / V288)</name>
    <dbReference type="NCBI Taxonomy" id="467705"/>
    <lineage>
        <taxon>Bacteria</taxon>
        <taxon>Bacillati</taxon>
        <taxon>Bacillota</taxon>
        <taxon>Bacilli</taxon>
        <taxon>Lactobacillales</taxon>
        <taxon>Streptococcaceae</taxon>
        <taxon>Streptococcus</taxon>
    </lineage>
</organism>
<feature type="chain" id="PRO_0000323344" description="Small ribosomal subunit protein uS11">
    <location>
        <begin position="1"/>
        <end position="127"/>
    </location>
</feature>